<dbReference type="EMBL" id="AK045128">
    <property type="protein sequence ID" value="BAC32235.1"/>
    <property type="molecule type" value="mRNA"/>
</dbReference>
<dbReference type="EMBL" id="AK082614">
    <property type="protein sequence ID" value="BAC38549.1"/>
    <property type="molecule type" value="mRNA"/>
</dbReference>
<dbReference type="EMBL" id="BC008617">
    <property type="protein sequence ID" value="AAH08617.1"/>
    <property type="molecule type" value="mRNA"/>
</dbReference>
<dbReference type="EMBL" id="BC112388">
    <property type="protein sequence ID" value="AAI12389.1"/>
    <property type="molecule type" value="mRNA"/>
</dbReference>
<dbReference type="EMBL" id="BC115529">
    <property type="protein sequence ID" value="AAI15530.1"/>
    <property type="molecule type" value="mRNA"/>
</dbReference>
<dbReference type="CCDS" id="CCDS19580.1">
    <molecule id="Q8C4B4-1"/>
</dbReference>
<dbReference type="RefSeq" id="NP_780561.1">
    <molecule id="Q8C4B4-1"/>
    <property type="nucleotide sequence ID" value="NM_175352.4"/>
</dbReference>
<dbReference type="SMR" id="Q8C4B4"/>
<dbReference type="BioGRID" id="223139">
    <property type="interactions" value="1"/>
</dbReference>
<dbReference type="FunCoup" id="Q8C4B4">
    <property type="interactions" value="375"/>
</dbReference>
<dbReference type="IntAct" id="Q8C4B4">
    <property type="interactions" value="1"/>
</dbReference>
<dbReference type="STRING" id="10090.ENSMUSP00000055475"/>
<dbReference type="iPTMnet" id="Q8C4B4"/>
<dbReference type="PhosphoSitePlus" id="Q8C4B4"/>
<dbReference type="SwissPalm" id="Q8C4B4"/>
<dbReference type="PaxDb" id="10090-ENSMUSP00000055475"/>
<dbReference type="PeptideAtlas" id="Q8C4B4"/>
<dbReference type="ProteomicsDB" id="298162">
    <molecule id="Q8C4B4-1"/>
</dbReference>
<dbReference type="ProteomicsDB" id="298163">
    <molecule id="Q8C4B4-2"/>
</dbReference>
<dbReference type="Pumba" id="Q8C4B4"/>
<dbReference type="Antibodypedia" id="53998">
    <property type="antibodies" value="61 antibodies from 14 providers"/>
</dbReference>
<dbReference type="DNASU" id="106840"/>
<dbReference type="Ensembl" id="ENSMUST00000060798.6">
    <molecule id="Q8C4B4-1"/>
    <property type="protein sequence ID" value="ENSMUSP00000055475.6"/>
    <property type="gene ID" value="ENSMUSG00000046562.6"/>
</dbReference>
<dbReference type="GeneID" id="106840"/>
<dbReference type="KEGG" id="mmu:106840"/>
<dbReference type="UCSC" id="uc008zdc.1">
    <molecule id="Q8C4B4-1"/>
    <property type="organism name" value="mouse"/>
</dbReference>
<dbReference type="UCSC" id="uc008zdd.1">
    <molecule id="Q8C4B4-2"/>
    <property type="organism name" value="mouse"/>
</dbReference>
<dbReference type="AGR" id="MGI:2147162"/>
<dbReference type="CTD" id="84747"/>
<dbReference type="MGI" id="MGI:2147162">
    <property type="gene designation" value="Unc119b"/>
</dbReference>
<dbReference type="VEuPathDB" id="HostDB:ENSMUSG00000046562"/>
<dbReference type="eggNOG" id="KOG4037">
    <property type="taxonomic scope" value="Eukaryota"/>
</dbReference>
<dbReference type="GeneTree" id="ENSGT00390000014595"/>
<dbReference type="HOGENOM" id="CLU_088825_0_0_1"/>
<dbReference type="InParanoid" id="Q8C4B4"/>
<dbReference type="OMA" id="IYNIEFT"/>
<dbReference type="OrthoDB" id="10248777at2759"/>
<dbReference type="PhylomeDB" id="Q8C4B4"/>
<dbReference type="TreeFam" id="TF314474"/>
<dbReference type="Reactome" id="R-MMU-5624138">
    <property type="pathway name" value="Trafficking of myristoylated proteins to the cilium"/>
</dbReference>
<dbReference type="BioGRID-ORCS" id="106840">
    <property type="hits" value="1 hit in 77 CRISPR screens"/>
</dbReference>
<dbReference type="ChiTaRS" id="Unc119b">
    <property type="organism name" value="mouse"/>
</dbReference>
<dbReference type="PRO" id="PR:Q8C4B4"/>
<dbReference type="Proteomes" id="UP000000589">
    <property type="component" value="Chromosome 5"/>
</dbReference>
<dbReference type="RNAct" id="Q8C4B4">
    <property type="molecule type" value="protein"/>
</dbReference>
<dbReference type="Bgee" id="ENSMUSG00000046562">
    <property type="expression patterns" value="Expressed in saccule of membranous labyrinth and 261 other cell types or tissues"/>
</dbReference>
<dbReference type="GO" id="GO:0035869">
    <property type="term" value="C:ciliary transition zone"/>
    <property type="evidence" value="ECO:0000250"/>
    <property type="project" value="UniProtKB"/>
</dbReference>
<dbReference type="GO" id="GO:0008289">
    <property type="term" value="F:lipid binding"/>
    <property type="evidence" value="ECO:0000250"/>
    <property type="project" value="UniProtKB"/>
</dbReference>
<dbReference type="GO" id="GO:0060271">
    <property type="term" value="P:cilium assembly"/>
    <property type="evidence" value="ECO:0007669"/>
    <property type="project" value="Ensembl"/>
</dbReference>
<dbReference type="GO" id="GO:0042953">
    <property type="term" value="P:lipoprotein transport"/>
    <property type="evidence" value="ECO:0000250"/>
    <property type="project" value="UniProtKB"/>
</dbReference>
<dbReference type="FunFam" id="2.70.50.40:FF:000001">
    <property type="entry name" value="protein unc-119 homolog A"/>
    <property type="match status" value="1"/>
</dbReference>
<dbReference type="Gene3D" id="2.70.50.40">
    <property type="entry name" value="GMP phosphodiesterase, delta subunit"/>
    <property type="match status" value="1"/>
</dbReference>
<dbReference type="InterPro" id="IPR014756">
    <property type="entry name" value="Ig_E-set"/>
</dbReference>
<dbReference type="InterPro" id="IPR051519">
    <property type="entry name" value="PDE6D_unc-119_myristoyl-bd"/>
</dbReference>
<dbReference type="InterPro" id="IPR008015">
    <property type="entry name" value="PDED_dom"/>
</dbReference>
<dbReference type="InterPro" id="IPR037036">
    <property type="entry name" value="PDED_dom_sf"/>
</dbReference>
<dbReference type="PANTHER" id="PTHR12951:SF3">
    <property type="entry name" value="PROTEIN UNC-119 HOMOLOG B"/>
    <property type="match status" value="1"/>
</dbReference>
<dbReference type="PANTHER" id="PTHR12951">
    <property type="entry name" value="RETINAL PROTEIN 4"/>
    <property type="match status" value="1"/>
</dbReference>
<dbReference type="Pfam" id="PF05351">
    <property type="entry name" value="GMP_PDE_delta"/>
    <property type="match status" value="1"/>
</dbReference>
<dbReference type="SUPFAM" id="SSF81296">
    <property type="entry name" value="E set domains"/>
    <property type="match status" value="1"/>
</dbReference>
<organism>
    <name type="scientific">Mus musculus</name>
    <name type="common">Mouse</name>
    <dbReference type="NCBI Taxonomy" id="10090"/>
    <lineage>
        <taxon>Eukaryota</taxon>
        <taxon>Metazoa</taxon>
        <taxon>Chordata</taxon>
        <taxon>Craniata</taxon>
        <taxon>Vertebrata</taxon>
        <taxon>Euteleostomi</taxon>
        <taxon>Mammalia</taxon>
        <taxon>Eutheria</taxon>
        <taxon>Euarchontoglires</taxon>
        <taxon>Glires</taxon>
        <taxon>Rodentia</taxon>
        <taxon>Myomorpha</taxon>
        <taxon>Muroidea</taxon>
        <taxon>Muridae</taxon>
        <taxon>Murinae</taxon>
        <taxon>Mus</taxon>
        <taxon>Mus</taxon>
    </lineage>
</organism>
<comment type="function">
    <text evidence="1">Myristoyl-binding protein that acts as a cargo adapter: specifically binds the myristoyl moiety of a subset of N-terminally myristoylated proteins and is required for their localization. Binds myristoylated NPHP3 and plays a key role in localization of NPHP3 to the primary cilium membrane. Does not bind all myristoylated proteins. Probably plays a role in trafficking proteins in photoreceptor cells (By similarity).</text>
</comment>
<comment type="subunit">
    <text evidence="1">Found in a complex with ARL3, RP2 and UNC119B; RP2 induces hydrolysis of GTP ARL3 in the complex, leading to the release of UNC119B. Interacts with NPHP3 (when myristoylated). Interacts with CYS1 (when myristoylated). Interacts with MACIR; interaction only takes place when UNC119B is not liganded with myristoylated proteins (By similarity).</text>
</comment>
<comment type="subcellular location">
    <subcellularLocation>
        <location evidence="1">Cell projection</location>
        <location evidence="1">Cilium</location>
    </subcellularLocation>
    <text evidence="1">Enriched at the transition zone and extended into the proximal end of the cilium.</text>
</comment>
<comment type="alternative products">
    <event type="alternative splicing"/>
    <isoform>
        <id>Q8C4B4-1</id>
        <name>1</name>
        <sequence type="displayed"/>
    </isoform>
    <isoform>
        <id>Q8C4B4-2</id>
        <name>2</name>
        <sequence type="described" ref="VSP_033985"/>
    </isoform>
</comment>
<comment type="domain">
    <text evidence="1">Adopts an immunoglobulin-like beta-sandwich fold forming a hydrophobic cavity that capture N-terminally myristoylated target peptides. Phe residues within the hydrophobic beta sandwich are required for myristate binding (By similarity).</text>
</comment>
<comment type="similarity">
    <text evidence="5">Belongs to the PDE6D/unc-119 family.</text>
</comment>
<evidence type="ECO:0000250" key="1"/>
<evidence type="ECO:0000250" key="2">
    <source>
        <dbReference type="UniProtKB" id="A6NIH7"/>
    </source>
</evidence>
<evidence type="ECO:0000256" key="3">
    <source>
        <dbReference type="SAM" id="MobiDB-lite"/>
    </source>
</evidence>
<evidence type="ECO:0000303" key="4">
    <source>
    </source>
</evidence>
<evidence type="ECO:0000305" key="5"/>
<evidence type="ECO:0007744" key="6">
    <source>
    </source>
</evidence>
<reference key="1">
    <citation type="journal article" date="2005" name="Science">
        <title>The transcriptional landscape of the mammalian genome.</title>
        <authorList>
            <person name="Carninci P."/>
            <person name="Kasukawa T."/>
            <person name="Katayama S."/>
            <person name="Gough J."/>
            <person name="Frith M.C."/>
            <person name="Maeda N."/>
            <person name="Oyama R."/>
            <person name="Ravasi T."/>
            <person name="Lenhard B."/>
            <person name="Wells C."/>
            <person name="Kodzius R."/>
            <person name="Shimokawa K."/>
            <person name="Bajic V.B."/>
            <person name="Brenner S.E."/>
            <person name="Batalov S."/>
            <person name="Forrest A.R."/>
            <person name="Zavolan M."/>
            <person name="Davis M.J."/>
            <person name="Wilming L.G."/>
            <person name="Aidinis V."/>
            <person name="Allen J.E."/>
            <person name="Ambesi-Impiombato A."/>
            <person name="Apweiler R."/>
            <person name="Aturaliya R.N."/>
            <person name="Bailey T.L."/>
            <person name="Bansal M."/>
            <person name="Baxter L."/>
            <person name="Beisel K.W."/>
            <person name="Bersano T."/>
            <person name="Bono H."/>
            <person name="Chalk A.M."/>
            <person name="Chiu K.P."/>
            <person name="Choudhary V."/>
            <person name="Christoffels A."/>
            <person name="Clutterbuck D.R."/>
            <person name="Crowe M.L."/>
            <person name="Dalla E."/>
            <person name="Dalrymple B.P."/>
            <person name="de Bono B."/>
            <person name="Della Gatta G."/>
            <person name="di Bernardo D."/>
            <person name="Down T."/>
            <person name="Engstrom P."/>
            <person name="Fagiolini M."/>
            <person name="Faulkner G."/>
            <person name="Fletcher C.F."/>
            <person name="Fukushima T."/>
            <person name="Furuno M."/>
            <person name="Futaki S."/>
            <person name="Gariboldi M."/>
            <person name="Georgii-Hemming P."/>
            <person name="Gingeras T.R."/>
            <person name="Gojobori T."/>
            <person name="Green R.E."/>
            <person name="Gustincich S."/>
            <person name="Harbers M."/>
            <person name="Hayashi Y."/>
            <person name="Hensch T.K."/>
            <person name="Hirokawa N."/>
            <person name="Hill D."/>
            <person name="Huminiecki L."/>
            <person name="Iacono M."/>
            <person name="Ikeo K."/>
            <person name="Iwama A."/>
            <person name="Ishikawa T."/>
            <person name="Jakt M."/>
            <person name="Kanapin A."/>
            <person name="Katoh M."/>
            <person name="Kawasawa Y."/>
            <person name="Kelso J."/>
            <person name="Kitamura H."/>
            <person name="Kitano H."/>
            <person name="Kollias G."/>
            <person name="Krishnan S.P."/>
            <person name="Kruger A."/>
            <person name="Kummerfeld S.K."/>
            <person name="Kurochkin I.V."/>
            <person name="Lareau L.F."/>
            <person name="Lazarevic D."/>
            <person name="Lipovich L."/>
            <person name="Liu J."/>
            <person name="Liuni S."/>
            <person name="McWilliam S."/>
            <person name="Madan Babu M."/>
            <person name="Madera M."/>
            <person name="Marchionni L."/>
            <person name="Matsuda H."/>
            <person name="Matsuzawa S."/>
            <person name="Miki H."/>
            <person name="Mignone F."/>
            <person name="Miyake S."/>
            <person name="Morris K."/>
            <person name="Mottagui-Tabar S."/>
            <person name="Mulder N."/>
            <person name="Nakano N."/>
            <person name="Nakauchi H."/>
            <person name="Ng P."/>
            <person name="Nilsson R."/>
            <person name="Nishiguchi S."/>
            <person name="Nishikawa S."/>
            <person name="Nori F."/>
            <person name="Ohara O."/>
            <person name="Okazaki Y."/>
            <person name="Orlando V."/>
            <person name="Pang K.C."/>
            <person name="Pavan W.J."/>
            <person name="Pavesi G."/>
            <person name="Pesole G."/>
            <person name="Petrovsky N."/>
            <person name="Piazza S."/>
            <person name="Reed J."/>
            <person name="Reid J.F."/>
            <person name="Ring B.Z."/>
            <person name="Ringwald M."/>
            <person name="Rost B."/>
            <person name="Ruan Y."/>
            <person name="Salzberg S.L."/>
            <person name="Sandelin A."/>
            <person name="Schneider C."/>
            <person name="Schoenbach C."/>
            <person name="Sekiguchi K."/>
            <person name="Semple C.A."/>
            <person name="Seno S."/>
            <person name="Sessa L."/>
            <person name="Sheng Y."/>
            <person name="Shibata Y."/>
            <person name="Shimada H."/>
            <person name="Shimada K."/>
            <person name="Silva D."/>
            <person name="Sinclair B."/>
            <person name="Sperling S."/>
            <person name="Stupka E."/>
            <person name="Sugiura K."/>
            <person name="Sultana R."/>
            <person name="Takenaka Y."/>
            <person name="Taki K."/>
            <person name="Tammoja K."/>
            <person name="Tan S.L."/>
            <person name="Tang S."/>
            <person name="Taylor M.S."/>
            <person name="Tegner J."/>
            <person name="Teichmann S.A."/>
            <person name="Ueda H.R."/>
            <person name="van Nimwegen E."/>
            <person name="Verardo R."/>
            <person name="Wei C.L."/>
            <person name="Yagi K."/>
            <person name="Yamanishi H."/>
            <person name="Zabarovsky E."/>
            <person name="Zhu S."/>
            <person name="Zimmer A."/>
            <person name="Hide W."/>
            <person name="Bult C."/>
            <person name="Grimmond S.M."/>
            <person name="Teasdale R.D."/>
            <person name="Liu E.T."/>
            <person name="Brusic V."/>
            <person name="Quackenbush J."/>
            <person name="Wahlestedt C."/>
            <person name="Mattick J.S."/>
            <person name="Hume D.A."/>
            <person name="Kai C."/>
            <person name="Sasaki D."/>
            <person name="Tomaru Y."/>
            <person name="Fukuda S."/>
            <person name="Kanamori-Katayama M."/>
            <person name="Suzuki M."/>
            <person name="Aoki J."/>
            <person name="Arakawa T."/>
            <person name="Iida J."/>
            <person name="Imamura K."/>
            <person name="Itoh M."/>
            <person name="Kato T."/>
            <person name="Kawaji H."/>
            <person name="Kawagashira N."/>
            <person name="Kawashima T."/>
            <person name="Kojima M."/>
            <person name="Kondo S."/>
            <person name="Konno H."/>
            <person name="Nakano K."/>
            <person name="Ninomiya N."/>
            <person name="Nishio T."/>
            <person name="Okada M."/>
            <person name="Plessy C."/>
            <person name="Shibata K."/>
            <person name="Shiraki T."/>
            <person name="Suzuki S."/>
            <person name="Tagami M."/>
            <person name="Waki K."/>
            <person name="Watahiki A."/>
            <person name="Okamura-Oho Y."/>
            <person name="Suzuki H."/>
            <person name="Kawai J."/>
            <person name="Hayashizaki Y."/>
        </authorList>
    </citation>
    <scope>NUCLEOTIDE SEQUENCE [LARGE SCALE MRNA] (ISOFORMS 1 AND 2)</scope>
    <source>
        <strain>C57BL/6J</strain>
        <tissue>Cerebellum</tissue>
        <tissue>Embryo</tissue>
    </source>
</reference>
<reference key="2">
    <citation type="journal article" date="2004" name="Genome Res.">
        <title>The status, quality, and expansion of the NIH full-length cDNA project: the Mammalian Gene Collection (MGC).</title>
        <authorList>
            <consortium name="The MGC Project Team"/>
        </authorList>
    </citation>
    <scope>NUCLEOTIDE SEQUENCE [LARGE SCALE MRNA] (ISOFORM 1)</scope>
    <source>
        <strain>Czech II</strain>
        <strain>FVB/N</strain>
        <tissue>Mammary tumor</tissue>
    </source>
</reference>
<reference key="3">
    <citation type="journal article" date="2010" name="Cell">
        <title>A tissue-specific atlas of mouse protein phosphorylation and expression.</title>
        <authorList>
            <person name="Huttlin E.L."/>
            <person name="Jedrychowski M.P."/>
            <person name="Elias J.E."/>
            <person name="Goswami T."/>
            <person name="Rad R."/>
            <person name="Beausoleil S.A."/>
            <person name="Villen J."/>
            <person name="Haas W."/>
            <person name="Sowa M.E."/>
            <person name="Gygi S.P."/>
        </authorList>
    </citation>
    <scope>IDENTIFICATION BY MASS SPECTROMETRY [LARGE SCALE ANALYSIS]</scope>
    <source>
        <tissue>Brain</tissue>
        <tissue>Kidney</tissue>
        <tissue>Lung</tissue>
        <tissue>Spleen</tissue>
        <tissue>Testis</tissue>
    </source>
</reference>
<reference key="4">
    <citation type="journal article" date="2013" name="Mol. Cell">
        <title>SIRT5-mediated lysine desuccinylation impacts diverse metabolic pathways.</title>
        <authorList>
            <person name="Park J."/>
            <person name="Chen Y."/>
            <person name="Tishkoff D.X."/>
            <person name="Peng C."/>
            <person name="Tan M."/>
            <person name="Dai L."/>
            <person name="Xie Z."/>
            <person name="Zhang Y."/>
            <person name="Zwaans B.M."/>
            <person name="Skinner M.E."/>
            <person name="Lombard D.B."/>
            <person name="Zhao Y."/>
        </authorList>
    </citation>
    <scope>ACETYLATION [LARGE SCALE ANALYSIS] AT LYS-24</scope>
    <scope>IDENTIFICATION BY MASS SPECTROMETRY [LARGE SCALE ANALYSIS]</scope>
    <source>
        <tissue>Embryonic fibroblast</tissue>
    </source>
</reference>
<sequence length="251" mass="28303">MSGSNPKAATAGSQAGPGGLVAGKEEKKKAGGGVLNRLKARRQGPPHTPDDGSGAAVTEQELLALDTIRPEHVLRLNRVTENYLCKPEDNVYSIDFTRFKIRDLETGTVLFEIAKPCISDQDQDAEEESVDVDISVGRFVRYQFTPAFLRLRTVGATVEFTVGDRPVTGFRMIERHYFRERLLKTFDFDFGFCIPSSRNTCEHIYEFPQLSEDVIRLMIENPYETRSDSFYFVDNKLVMHNKADYAYNGGQ</sequence>
<gene>
    <name type="primary">Unc119b</name>
</gene>
<feature type="initiator methionine" description="Removed" evidence="2">
    <location>
        <position position="1"/>
    </location>
</feature>
<feature type="chain" id="PRO_0000337229" description="Protein unc-119 homolog B">
    <location>
        <begin position="2"/>
        <end position="251"/>
    </location>
</feature>
<feature type="region of interest" description="Disordered" evidence="3">
    <location>
        <begin position="1"/>
        <end position="56"/>
    </location>
</feature>
<feature type="compositionally biased region" description="Polar residues" evidence="3">
    <location>
        <begin position="1"/>
        <end position="13"/>
    </location>
</feature>
<feature type="binding site" evidence="1">
    <location>
        <position position="142"/>
    </location>
    <ligand>
        <name>tetradecanoate</name>
        <dbReference type="ChEBI" id="CHEBI:30807"/>
    </ligand>
</feature>
<feature type="modified residue" description="N-acetylserine" evidence="2">
    <location>
        <position position="2"/>
    </location>
</feature>
<feature type="modified residue" description="N6-acetyllysine" evidence="6">
    <location>
        <position position="24"/>
    </location>
</feature>
<feature type="splice variant" id="VSP_033985" description="In isoform 2." evidence="4">
    <original>DQDQDAEEESVDVDISVGRFVRYQFTPAFLRLRTVGATVEFTVGDRPVTGFRMIERHYFRERLLKTFDFDFGFCIPSSRNTCEHIYEFPQLSEDVIRLMIENPYETRSDSFYFVDNKLVMHNKADYAYNGGQ</original>
    <variation>GGPGYCGHKPGRKGPWEAQSFWDAGVCHFHDYFLSACLPVAHQFRALLKGWCVCVCVFECLCVPECTRWRPGDNFVESGFCFHICGGSREYVAGTSVH</variation>
    <location>
        <begin position="120"/>
        <end position="251"/>
    </location>
</feature>
<feature type="sequence conflict" description="In Ref. 2; AAI15530." evidence="5" ref="2">
    <original>E</original>
    <variation>K</variation>
    <location>
        <position position="26"/>
    </location>
</feature>
<accession>Q8C4B4</accession>
<accession>Q14BY8</accession>
<accession>Q8BRC4</accession>
<accession>Q922B4</accession>
<name>U119B_MOUSE</name>
<keyword id="KW-0007">Acetylation</keyword>
<keyword id="KW-0025">Alternative splicing</keyword>
<keyword id="KW-0966">Cell projection</keyword>
<keyword id="KW-0969">Cilium</keyword>
<keyword id="KW-0970">Cilium biogenesis/degradation</keyword>
<keyword id="KW-0446">Lipid-binding</keyword>
<keyword id="KW-0653">Protein transport</keyword>
<keyword id="KW-1185">Reference proteome</keyword>
<keyword id="KW-0813">Transport</keyword>
<proteinExistence type="evidence at protein level"/>
<protein>
    <recommendedName>
        <fullName>Protein unc-119 homolog B</fullName>
    </recommendedName>
</protein>